<dbReference type="EC" id="6.1.1.5" evidence="1"/>
<dbReference type="EMBL" id="CP000828">
    <property type="protein sequence ID" value="ABW28892.1"/>
    <property type="molecule type" value="Genomic_DNA"/>
</dbReference>
<dbReference type="RefSeq" id="WP_012164256.1">
    <property type="nucleotide sequence ID" value="NC_009925.1"/>
</dbReference>
<dbReference type="SMR" id="B0C872"/>
<dbReference type="STRING" id="329726.AM1_3907"/>
<dbReference type="KEGG" id="amr:AM1_3907"/>
<dbReference type="eggNOG" id="COG0060">
    <property type="taxonomic scope" value="Bacteria"/>
</dbReference>
<dbReference type="HOGENOM" id="CLU_001493_7_0_3"/>
<dbReference type="OrthoDB" id="9810365at2"/>
<dbReference type="Proteomes" id="UP000000268">
    <property type="component" value="Chromosome"/>
</dbReference>
<dbReference type="GO" id="GO:0005737">
    <property type="term" value="C:cytoplasm"/>
    <property type="evidence" value="ECO:0007669"/>
    <property type="project" value="UniProtKB-SubCell"/>
</dbReference>
<dbReference type="GO" id="GO:0002161">
    <property type="term" value="F:aminoacyl-tRNA deacylase activity"/>
    <property type="evidence" value="ECO:0007669"/>
    <property type="project" value="InterPro"/>
</dbReference>
<dbReference type="GO" id="GO:0005524">
    <property type="term" value="F:ATP binding"/>
    <property type="evidence" value="ECO:0007669"/>
    <property type="project" value="UniProtKB-UniRule"/>
</dbReference>
<dbReference type="GO" id="GO:0004822">
    <property type="term" value="F:isoleucine-tRNA ligase activity"/>
    <property type="evidence" value="ECO:0007669"/>
    <property type="project" value="UniProtKB-UniRule"/>
</dbReference>
<dbReference type="GO" id="GO:0000049">
    <property type="term" value="F:tRNA binding"/>
    <property type="evidence" value="ECO:0007669"/>
    <property type="project" value="InterPro"/>
</dbReference>
<dbReference type="GO" id="GO:0008270">
    <property type="term" value="F:zinc ion binding"/>
    <property type="evidence" value="ECO:0007669"/>
    <property type="project" value="UniProtKB-UniRule"/>
</dbReference>
<dbReference type="GO" id="GO:0006428">
    <property type="term" value="P:isoleucyl-tRNA aminoacylation"/>
    <property type="evidence" value="ECO:0007669"/>
    <property type="project" value="UniProtKB-UniRule"/>
</dbReference>
<dbReference type="CDD" id="cd07960">
    <property type="entry name" value="Anticodon_Ia_Ile_BEm"/>
    <property type="match status" value="1"/>
</dbReference>
<dbReference type="CDD" id="cd00818">
    <property type="entry name" value="IleRS_core"/>
    <property type="match status" value="1"/>
</dbReference>
<dbReference type="FunFam" id="1.10.730.20:FF:000001">
    <property type="entry name" value="Isoleucine--tRNA ligase"/>
    <property type="match status" value="1"/>
</dbReference>
<dbReference type="FunFam" id="3.40.50.620:FF:000152">
    <property type="entry name" value="Isoleucine--tRNA ligase"/>
    <property type="match status" value="1"/>
</dbReference>
<dbReference type="FunFam" id="3.90.740.10:FF:000009">
    <property type="entry name" value="Isoleucyl-tRNA synthetase 2, mitochondrial"/>
    <property type="match status" value="1"/>
</dbReference>
<dbReference type="Gene3D" id="1.10.730.20">
    <property type="match status" value="1"/>
</dbReference>
<dbReference type="Gene3D" id="3.40.50.620">
    <property type="entry name" value="HUPs"/>
    <property type="match status" value="2"/>
</dbReference>
<dbReference type="Gene3D" id="1.10.10.830">
    <property type="entry name" value="Ile-tRNA synthetase CP2 domain-like"/>
    <property type="match status" value="1"/>
</dbReference>
<dbReference type="Gene3D" id="3.90.740.10">
    <property type="entry name" value="Valyl/Leucyl/Isoleucyl-tRNA synthetase, editing domain"/>
    <property type="match status" value="1"/>
</dbReference>
<dbReference type="HAMAP" id="MF_02002">
    <property type="entry name" value="Ile_tRNA_synth_type1"/>
    <property type="match status" value="1"/>
</dbReference>
<dbReference type="InterPro" id="IPR001412">
    <property type="entry name" value="aa-tRNA-synth_I_CS"/>
</dbReference>
<dbReference type="InterPro" id="IPR002300">
    <property type="entry name" value="aa-tRNA-synth_Ia"/>
</dbReference>
<dbReference type="InterPro" id="IPR033708">
    <property type="entry name" value="Anticodon_Ile_BEm"/>
</dbReference>
<dbReference type="InterPro" id="IPR002301">
    <property type="entry name" value="Ile-tRNA-ligase"/>
</dbReference>
<dbReference type="InterPro" id="IPR023585">
    <property type="entry name" value="Ile-tRNA-ligase_type1"/>
</dbReference>
<dbReference type="InterPro" id="IPR050081">
    <property type="entry name" value="Ile-tRNA_ligase"/>
</dbReference>
<dbReference type="InterPro" id="IPR013155">
    <property type="entry name" value="M/V/L/I-tRNA-synth_anticd-bd"/>
</dbReference>
<dbReference type="InterPro" id="IPR014729">
    <property type="entry name" value="Rossmann-like_a/b/a_fold"/>
</dbReference>
<dbReference type="InterPro" id="IPR009080">
    <property type="entry name" value="tRNAsynth_Ia_anticodon-bd"/>
</dbReference>
<dbReference type="InterPro" id="IPR009008">
    <property type="entry name" value="Val/Leu/Ile-tRNA-synth_edit"/>
</dbReference>
<dbReference type="InterPro" id="IPR010663">
    <property type="entry name" value="Znf_FPG/IleRS"/>
</dbReference>
<dbReference type="NCBIfam" id="TIGR00392">
    <property type="entry name" value="ileS"/>
    <property type="match status" value="1"/>
</dbReference>
<dbReference type="PANTHER" id="PTHR42765:SF1">
    <property type="entry name" value="ISOLEUCINE--TRNA LIGASE, MITOCHONDRIAL"/>
    <property type="match status" value="1"/>
</dbReference>
<dbReference type="PANTHER" id="PTHR42765">
    <property type="entry name" value="SOLEUCYL-TRNA SYNTHETASE"/>
    <property type="match status" value="1"/>
</dbReference>
<dbReference type="Pfam" id="PF08264">
    <property type="entry name" value="Anticodon_1"/>
    <property type="match status" value="1"/>
</dbReference>
<dbReference type="Pfam" id="PF00133">
    <property type="entry name" value="tRNA-synt_1"/>
    <property type="match status" value="1"/>
</dbReference>
<dbReference type="Pfam" id="PF06827">
    <property type="entry name" value="zf-FPG_IleRS"/>
    <property type="match status" value="1"/>
</dbReference>
<dbReference type="PRINTS" id="PR00984">
    <property type="entry name" value="TRNASYNTHILE"/>
</dbReference>
<dbReference type="SUPFAM" id="SSF47323">
    <property type="entry name" value="Anticodon-binding domain of a subclass of class I aminoacyl-tRNA synthetases"/>
    <property type="match status" value="1"/>
</dbReference>
<dbReference type="SUPFAM" id="SSF52374">
    <property type="entry name" value="Nucleotidylyl transferase"/>
    <property type="match status" value="1"/>
</dbReference>
<dbReference type="SUPFAM" id="SSF50677">
    <property type="entry name" value="ValRS/IleRS/LeuRS editing domain"/>
    <property type="match status" value="1"/>
</dbReference>
<dbReference type="PROSITE" id="PS00178">
    <property type="entry name" value="AA_TRNA_LIGASE_I"/>
    <property type="match status" value="1"/>
</dbReference>
<proteinExistence type="inferred from homology"/>
<protein>
    <recommendedName>
        <fullName evidence="1">Isoleucine--tRNA ligase</fullName>
        <ecNumber evidence="1">6.1.1.5</ecNumber>
    </recommendedName>
    <alternativeName>
        <fullName evidence="1">Isoleucyl-tRNA synthetase</fullName>
        <shortName evidence="1">IleRS</shortName>
    </alternativeName>
</protein>
<keyword id="KW-0030">Aminoacyl-tRNA synthetase</keyword>
<keyword id="KW-0067">ATP-binding</keyword>
<keyword id="KW-0963">Cytoplasm</keyword>
<keyword id="KW-0436">Ligase</keyword>
<keyword id="KW-0479">Metal-binding</keyword>
<keyword id="KW-0547">Nucleotide-binding</keyword>
<keyword id="KW-0648">Protein biosynthesis</keyword>
<keyword id="KW-1185">Reference proteome</keyword>
<keyword id="KW-0862">Zinc</keyword>
<feature type="chain" id="PRO_1000088541" description="Isoleucine--tRNA ligase">
    <location>
        <begin position="1"/>
        <end position="971"/>
    </location>
</feature>
<feature type="short sequence motif" description="'HIGH' region">
    <location>
        <begin position="60"/>
        <end position="70"/>
    </location>
</feature>
<feature type="short sequence motif" description="'KMSKS' region">
    <location>
        <begin position="604"/>
        <end position="608"/>
    </location>
</feature>
<feature type="binding site" evidence="1">
    <location>
        <position position="563"/>
    </location>
    <ligand>
        <name>L-isoleucyl-5'-AMP</name>
        <dbReference type="ChEBI" id="CHEBI:178002"/>
    </ligand>
</feature>
<feature type="binding site" evidence="1">
    <location>
        <position position="607"/>
    </location>
    <ligand>
        <name>ATP</name>
        <dbReference type="ChEBI" id="CHEBI:30616"/>
    </ligand>
</feature>
<feature type="binding site" evidence="1">
    <location>
        <position position="922"/>
    </location>
    <ligand>
        <name>Zn(2+)</name>
        <dbReference type="ChEBI" id="CHEBI:29105"/>
    </ligand>
</feature>
<feature type="binding site" evidence="1">
    <location>
        <position position="925"/>
    </location>
    <ligand>
        <name>Zn(2+)</name>
        <dbReference type="ChEBI" id="CHEBI:29105"/>
    </ligand>
</feature>
<feature type="binding site" evidence="1">
    <location>
        <position position="942"/>
    </location>
    <ligand>
        <name>Zn(2+)</name>
        <dbReference type="ChEBI" id="CHEBI:29105"/>
    </ligand>
</feature>
<feature type="binding site" evidence="1">
    <location>
        <position position="945"/>
    </location>
    <ligand>
        <name>Zn(2+)</name>
        <dbReference type="ChEBI" id="CHEBI:29105"/>
    </ligand>
</feature>
<organism>
    <name type="scientific">Acaryochloris marina (strain MBIC 11017)</name>
    <dbReference type="NCBI Taxonomy" id="329726"/>
    <lineage>
        <taxon>Bacteria</taxon>
        <taxon>Bacillati</taxon>
        <taxon>Cyanobacteriota</taxon>
        <taxon>Cyanophyceae</taxon>
        <taxon>Acaryochloridales</taxon>
        <taxon>Acaryochloridaceae</taxon>
        <taxon>Acaryochloris</taxon>
    </lineage>
</organism>
<gene>
    <name evidence="1" type="primary">ileS</name>
    <name type="ordered locus">AM1_3907</name>
</gene>
<accession>B0C872</accession>
<reference key="1">
    <citation type="journal article" date="2008" name="Proc. Natl. Acad. Sci. U.S.A.">
        <title>Niche adaptation and genome expansion in the chlorophyll d-producing cyanobacterium Acaryochloris marina.</title>
        <authorList>
            <person name="Swingley W.D."/>
            <person name="Chen M."/>
            <person name="Cheung P.C."/>
            <person name="Conrad A.L."/>
            <person name="Dejesa L.C."/>
            <person name="Hao J."/>
            <person name="Honchak B.M."/>
            <person name="Karbach L.E."/>
            <person name="Kurdoglu A."/>
            <person name="Lahiri S."/>
            <person name="Mastrian S.D."/>
            <person name="Miyashita H."/>
            <person name="Page L."/>
            <person name="Ramakrishna P."/>
            <person name="Satoh S."/>
            <person name="Sattley W.M."/>
            <person name="Shimada Y."/>
            <person name="Taylor H.L."/>
            <person name="Tomo T."/>
            <person name="Tsuchiya T."/>
            <person name="Wang Z.T."/>
            <person name="Raymond J."/>
            <person name="Mimuro M."/>
            <person name="Blankenship R.E."/>
            <person name="Touchman J.W."/>
        </authorList>
    </citation>
    <scope>NUCLEOTIDE SEQUENCE [LARGE SCALE GENOMIC DNA]</scope>
    <source>
        <strain>MBIC 11017</strain>
    </source>
</reference>
<sequence length="971" mass="109792">MTEPGRYKKTVNLPKTKFDMRANAVKREPELQKFWADHQIYENLSQNNPGDVFVLHDGPPYANGDLHIGHALNKILKDTINKFQLLQGRKVRYVPGWDCHGLPIELKVLQNIQPENRAKLTPLKLRWKARDFALKTVEKQSKSFQRYGVWGNWENPYLTLKPEYEAAQIGVFGKMALKGYIYRGFKPVYWSPSSQTALAEAELEYPEGHTSRSIYVTFKVTGLSETAQPLLDEYLPTLKVAIWTTTPWTIPGNLAVSLNPDLTYAVVKAGEDYLIVAEDLVETLTETLESSFKVIKTLPGKALENSTYQHPLFEREGPLVLGDYVTTESGTGLVHTAPGHGQEDYQVGQQYGLAMLSPVDGDGTFTDEAGPFAGLNVLNGGNEAVIEALQSAGALLKEESYAHKYPYDWRTKKPVILRATEQWFASVDGFREAVLDAIATVNWIPAQGENRITSMVSERSDWCISRQRNWGVPIPVFYNDATGEPLLNEATVNHIQGIVAEKGSDAWWELDNDELLPEPYRSDGNTYRKGTDTMDVWFDSGSSWAAVCDQREPLKYPAEMYLEGSDQHRGWFQSSILTSVATNGHAPYKTVLTHGFVLDEQGRKMSKSIGNVVDPAIVIAGGKNQKQDPPYGADVLRLWVSSVDYASDVPLGKNILKQMADVYRKIRNTSRFLLGNLHDFDPAQDAVAYEDLPQLDRYMLHRITEVFTDVTEAFESFQFFRFFQTVQNFCVVDLSNFYLDIAKDRLYISEPNAQRRRSCQTVLAIALENLARAIAPVLSHMAEDIWQSLPYETEHQSVFASGWMRLEDQWHNPDLASHWIVLREIRQEVNKVLEQARTEKEIGSSLEAKVLLYVSDTDLRQQLDAMNPSTGGGSNNVDELRYLFLASQVELLETPKNLDRLMYQFQSETLGVGVVTADGKKCDRCWNYSTYVGRSKQHPLLCDRCEPIIENLVTQGQISLTEEGRYQPNTK</sequence>
<name>SYI_ACAM1</name>
<evidence type="ECO:0000255" key="1">
    <source>
        <dbReference type="HAMAP-Rule" id="MF_02002"/>
    </source>
</evidence>
<comment type="function">
    <text evidence="1">Catalyzes the attachment of isoleucine to tRNA(Ile). As IleRS can inadvertently accommodate and process structurally similar amino acids such as valine, to avoid such errors it has two additional distinct tRNA(Ile)-dependent editing activities. One activity is designated as 'pretransfer' editing and involves the hydrolysis of activated Val-AMP. The other activity is designated 'posttransfer' editing and involves deacylation of mischarged Val-tRNA(Ile).</text>
</comment>
<comment type="catalytic activity">
    <reaction evidence="1">
        <text>tRNA(Ile) + L-isoleucine + ATP = L-isoleucyl-tRNA(Ile) + AMP + diphosphate</text>
        <dbReference type="Rhea" id="RHEA:11060"/>
        <dbReference type="Rhea" id="RHEA-COMP:9666"/>
        <dbReference type="Rhea" id="RHEA-COMP:9695"/>
        <dbReference type="ChEBI" id="CHEBI:30616"/>
        <dbReference type="ChEBI" id="CHEBI:33019"/>
        <dbReference type="ChEBI" id="CHEBI:58045"/>
        <dbReference type="ChEBI" id="CHEBI:78442"/>
        <dbReference type="ChEBI" id="CHEBI:78528"/>
        <dbReference type="ChEBI" id="CHEBI:456215"/>
        <dbReference type="EC" id="6.1.1.5"/>
    </reaction>
</comment>
<comment type="cofactor">
    <cofactor evidence="1">
        <name>Zn(2+)</name>
        <dbReference type="ChEBI" id="CHEBI:29105"/>
    </cofactor>
    <text evidence="1">Binds 1 zinc ion per subunit.</text>
</comment>
<comment type="subunit">
    <text evidence="1">Monomer.</text>
</comment>
<comment type="subcellular location">
    <subcellularLocation>
        <location evidence="1">Cytoplasm</location>
    </subcellularLocation>
</comment>
<comment type="domain">
    <text evidence="1">IleRS has two distinct active sites: one for aminoacylation and one for editing. The misactivated valine is translocated from the active site to the editing site, which sterically excludes the correctly activated isoleucine. The single editing site contains two valyl binding pockets, one specific for each substrate (Val-AMP or Val-tRNA(Ile)).</text>
</comment>
<comment type="similarity">
    <text evidence="1">Belongs to the class-I aminoacyl-tRNA synthetase family. IleS type 1 subfamily.</text>
</comment>